<name>MNMG_STRTD</name>
<protein>
    <recommendedName>
        <fullName evidence="1">tRNA uridine 5-carboxymethylaminomethyl modification enzyme MnmG</fullName>
    </recommendedName>
    <alternativeName>
        <fullName evidence="1">Glucose-inhibited division protein A</fullName>
    </alternativeName>
</protein>
<proteinExistence type="inferred from homology"/>
<keyword id="KW-0963">Cytoplasm</keyword>
<keyword id="KW-0274">FAD</keyword>
<keyword id="KW-0285">Flavoprotein</keyword>
<keyword id="KW-0520">NAD</keyword>
<keyword id="KW-0819">tRNA processing</keyword>
<dbReference type="EMBL" id="CP000419">
    <property type="protein sequence ID" value="ABJ67083.1"/>
    <property type="molecule type" value="Genomic_DNA"/>
</dbReference>
<dbReference type="RefSeq" id="WP_011681754.1">
    <property type="nucleotide sequence ID" value="NC_008532.1"/>
</dbReference>
<dbReference type="SMR" id="Q03I89"/>
<dbReference type="KEGG" id="ste:STER_1978"/>
<dbReference type="HOGENOM" id="CLU_007831_2_2_9"/>
<dbReference type="GO" id="GO:0005829">
    <property type="term" value="C:cytosol"/>
    <property type="evidence" value="ECO:0007669"/>
    <property type="project" value="TreeGrafter"/>
</dbReference>
<dbReference type="GO" id="GO:0050660">
    <property type="term" value="F:flavin adenine dinucleotide binding"/>
    <property type="evidence" value="ECO:0007669"/>
    <property type="project" value="UniProtKB-UniRule"/>
</dbReference>
<dbReference type="GO" id="GO:0030488">
    <property type="term" value="P:tRNA methylation"/>
    <property type="evidence" value="ECO:0007669"/>
    <property type="project" value="TreeGrafter"/>
</dbReference>
<dbReference type="GO" id="GO:0002098">
    <property type="term" value="P:tRNA wobble uridine modification"/>
    <property type="evidence" value="ECO:0007669"/>
    <property type="project" value="InterPro"/>
</dbReference>
<dbReference type="FunFam" id="1.10.10.1800:FF:000001">
    <property type="entry name" value="tRNA uridine 5-carboxymethylaminomethyl modification enzyme MnmG"/>
    <property type="match status" value="1"/>
</dbReference>
<dbReference type="FunFam" id="1.10.150.570:FF:000001">
    <property type="entry name" value="tRNA uridine 5-carboxymethylaminomethyl modification enzyme MnmG"/>
    <property type="match status" value="1"/>
</dbReference>
<dbReference type="FunFam" id="3.50.50.60:FF:000002">
    <property type="entry name" value="tRNA uridine 5-carboxymethylaminomethyl modification enzyme MnmG"/>
    <property type="match status" value="1"/>
</dbReference>
<dbReference type="FunFam" id="3.50.50.60:FF:000063">
    <property type="entry name" value="tRNA uridine 5-carboxymethylaminomethyl modification enzyme MnmG"/>
    <property type="match status" value="1"/>
</dbReference>
<dbReference type="Gene3D" id="3.50.50.60">
    <property type="entry name" value="FAD/NAD(P)-binding domain"/>
    <property type="match status" value="2"/>
</dbReference>
<dbReference type="Gene3D" id="1.10.150.570">
    <property type="entry name" value="GidA associated domain, C-terminal subdomain"/>
    <property type="match status" value="1"/>
</dbReference>
<dbReference type="Gene3D" id="1.10.10.1800">
    <property type="entry name" value="tRNA uridine 5-carboxymethylaminomethyl modification enzyme MnmG/GidA"/>
    <property type="match status" value="1"/>
</dbReference>
<dbReference type="HAMAP" id="MF_00129">
    <property type="entry name" value="MnmG_GidA"/>
    <property type="match status" value="1"/>
</dbReference>
<dbReference type="InterPro" id="IPR036188">
    <property type="entry name" value="FAD/NAD-bd_sf"/>
</dbReference>
<dbReference type="InterPro" id="IPR049312">
    <property type="entry name" value="GIDA_C_N"/>
</dbReference>
<dbReference type="InterPro" id="IPR004416">
    <property type="entry name" value="MnmG"/>
</dbReference>
<dbReference type="InterPro" id="IPR002218">
    <property type="entry name" value="MnmG-rel"/>
</dbReference>
<dbReference type="InterPro" id="IPR020595">
    <property type="entry name" value="MnmG-rel_CS"/>
</dbReference>
<dbReference type="InterPro" id="IPR026904">
    <property type="entry name" value="MnmG_C"/>
</dbReference>
<dbReference type="InterPro" id="IPR047001">
    <property type="entry name" value="MnmG_C_subdom"/>
</dbReference>
<dbReference type="InterPro" id="IPR044920">
    <property type="entry name" value="MnmG_C_subdom_sf"/>
</dbReference>
<dbReference type="InterPro" id="IPR040131">
    <property type="entry name" value="MnmG_N"/>
</dbReference>
<dbReference type="NCBIfam" id="TIGR00136">
    <property type="entry name" value="mnmG_gidA"/>
    <property type="match status" value="1"/>
</dbReference>
<dbReference type="PANTHER" id="PTHR11806">
    <property type="entry name" value="GLUCOSE INHIBITED DIVISION PROTEIN A"/>
    <property type="match status" value="1"/>
</dbReference>
<dbReference type="PANTHER" id="PTHR11806:SF0">
    <property type="entry name" value="PROTEIN MTO1 HOMOLOG, MITOCHONDRIAL"/>
    <property type="match status" value="1"/>
</dbReference>
<dbReference type="Pfam" id="PF01134">
    <property type="entry name" value="GIDA"/>
    <property type="match status" value="1"/>
</dbReference>
<dbReference type="Pfam" id="PF21680">
    <property type="entry name" value="GIDA_C_1st"/>
    <property type="match status" value="1"/>
</dbReference>
<dbReference type="Pfam" id="PF13932">
    <property type="entry name" value="SAM_GIDA_C"/>
    <property type="match status" value="1"/>
</dbReference>
<dbReference type="PRINTS" id="PR00368">
    <property type="entry name" value="FADPNR"/>
</dbReference>
<dbReference type="PRINTS" id="PR00411">
    <property type="entry name" value="PNDRDTASEI"/>
</dbReference>
<dbReference type="SMART" id="SM01228">
    <property type="entry name" value="GIDA_assoc_3"/>
    <property type="match status" value="1"/>
</dbReference>
<dbReference type="SUPFAM" id="SSF51905">
    <property type="entry name" value="FAD/NAD(P)-binding domain"/>
    <property type="match status" value="1"/>
</dbReference>
<dbReference type="PROSITE" id="PS01280">
    <property type="entry name" value="GIDA_1"/>
    <property type="match status" value="1"/>
</dbReference>
<dbReference type="PROSITE" id="PS01281">
    <property type="entry name" value="GIDA_2"/>
    <property type="match status" value="1"/>
</dbReference>
<reference key="1">
    <citation type="journal article" date="2006" name="Proc. Natl. Acad. Sci. U.S.A.">
        <title>Comparative genomics of the lactic acid bacteria.</title>
        <authorList>
            <person name="Makarova K.S."/>
            <person name="Slesarev A."/>
            <person name="Wolf Y.I."/>
            <person name="Sorokin A."/>
            <person name="Mirkin B."/>
            <person name="Koonin E.V."/>
            <person name="Pavlov A."/>
            <person name="Pavlova N."/>
            <person name="Karamychev V."/>
            <person name="Polouchine N."/>
            <person name="Shakhova V."/>
            <person name="Grigoriev I."/>
            <person name="Lou Y."/>
            <person name="Rohksar D."/>
            <person name="Lucas S."/>
            <person name="Huang K."/>
            <person name="Goodstein D.M."/>
            <person name="Hawkins T."/>
            <person name="Plengvidhya V."/>
            <person name="Welker D."/>
            <person name="Hughes J."/>
            <person name="Goh Y."/>
            <person name="Benson A."/>
            <person name="Baldwin K."/>
            <person name="Lee J.-H."/>
            <person name="Diaz-Muniz I."/>
            <person name="Dosti B."/>
            <person name="Smeianov V."/>
            <person name="Wechter W."/>
            <person name="Barabote R."/>
            <person name="Lorca G."/>
            <person name="Altermann E."/>
            <person name="Barrangou R."/>
            <person name="Ganesan B."/>
            <person name="Xie Y."/>
            <person name="Rawsthorne H."/>
            <person name="Tamir D."/>
            <person name="Parker C."/>
            <person name="Breidt F."/>
            <person name="Broadbent J.R."/>
            <person name="Hutkins R."/>
            <person name="O'Sullivan D."/>
            <person name="Steele J."/>
            <person name="Unlu G."/>
            <person name="Saier M.H. Jr."/>
            <person name="Klaenhammer T."/>
            <person name="Richardson P."/>
            <person name="Kozyavkin S."/>
            <person name="Weimer B.C."/>
            <person name="Mills D.A."/>
        </authorList>
    </citation>
    <scope>NUCLEOTIDE SEQUENCE [LARGE SCALE GENOMIC DNA]</scope>
    <source>
        <strain>ATCC BAA-491 / LMD-9</strain>
    </source>
</reference>
<sequence length="633" mass="70379">MSYEFDENFDVIVVGAGHAGVEASLAAARMGCKVLLATINLEMLAFMPCNPSIGGSAKGIVVREIDALGGEMGKNIDKTYIQMKMLNTGKGPAVRALRAQADKALYAMTMKHTVECQENLTLRQSMVDEILVEDSKVVGVRTATNQKYGAKAVVVTTGTALRGEIIIGDLKYSSGPNNSLASVTLADNLKELGLEIGRFKTGTPPRVKASSINYEETEIQPGDEKPNHFSFLSKDEDYLQDQIPCWLTYTNQESHDIINNNLHRAPMFSGIVKGVGPRYCPSIEDKIVRFADKNRHQLFLEPEGRETEEVYVQGLSTSLPEDVQKELIHSIKGLEKAEMIRTGYAIEYDIVLPHQLRATLETKLISGLFTAGQTNGTSGYEEAAGQGLVAGINAALKVQGKPELILKRSDAYIGVMIDDLVTKGTLEPYRLLTSRAEYRLILRHDNADMRLTPIGREVGLVDDERWNIFKIKKNQFDRELTRLSKEKLKPIKETNEKIQALGFKPLTDAMTAKEFMRRPEIDYATATQFVGPAAEDLDAKVIELLETEIKYEGYINKALDQVAKMKRMEEKKIPENIDWDAIDSIATEARQKFKKINPETIGQASRISGVNPADISILMVYLEGNNKARRKVD</sequence>
<comment type="function">
    <text evidence="1">NAD-binding protein involved in the addition of a carboxymethylaminomethyl (cmnm) group at the wobble position (U34) of certain tRNAs, forming tRNA-cmnm(5)s(2)U34.</text>
</comment>
<comment type="cofactor">
    <cofactor evidence="1">
        <name>FAD</name>
        <dbReference type="ChEBI" id="CHEBI:57692"/>
    </cofactor>
</comment>
<comment type="subunit">
    <text evidence="1">Homodimer. Heterotetramer of two MnmE and two MnmG subunits.</text>
</comment>
<comment type="subcellular location">
    <subcellularLocation>
        <location evidence="1">Cytoplasm</location>
    </subcellularLocation>
</comment>
<comment type="similarity">
    <text evidence="1">Belongs to the MnmG family.</text>
</comment>
<accession>Q03I89</accession>
<evidence type="ECO:0000255" key="1">
    <source>
        <dbReference type="HAMAP-Rule" id="MF_00129"/>
    </source>
</evidence>
<feature type="chain" id="PRO_1000016698" description="tRNA uridine 5-carboxymethylaminomethyl modification enzyme MnmG">
    <location>
        <begin position="1"/>
        <end position="633"/>
    </location>
</feature>
<feature type="binding site" evidence="1">
    <location>
        <begin position="15"/>
        <end position="20"/>
    </location>
    <ligand>
        <name>FAD</name>
        <dbReference type="ChEBI" id="CHEBI:57692"/>
    </ligand>
</feature>
<feature type="binding site" evidence="1">
    <location>
        <position position="127"/>
    </location>
    <ligand>
        <name>FAD</name>
        <dbReference type="ChEBI" id="CHEBI:57692"/>
    </ligand>
</feature>
<feature type="binding site" evidence="1">
    <location>
        <position position="182"/>
    </location>
    <ligand>
        <name>FAD</name>
        <dbReference type="ChEBI" id="CHEBI:57692"/>
    </ligand>
</feature>
<feature type="binding site" evidence="1">
    <location>
        <begin position="276"/>
        <end position="290"/>
    </location>
    <ligand>
        <name>NAD(+)</name>
        <dbReference type="ChEBI" id="CHEBI:57540"/>
    </ligand>
</feature>
<feature type="binding site" evidence="1">
    <location>
        <position position="373"/>
    </location>
    <ligand>
        <name>FAD</name>
        <dbReference type="ChEBI" id="CHEBI:57692"/>
    </ligand>
</feature>
<gene>
    <name evidence="1" type="primary">mnmG</name>
    <name evidence="1" type="synonym">gidA</name>
    <name type="ordered locus">STER_1978</name>
</gene>
<organism>
    <name type="scientific">Streptococcus thermophilus (strain ATCC BAA-491 / LMD-9)</name>
    <dbReference type="NCBI Taxonomy" id="322159"/>
    <lineage>
        <taxon>Bacteria</taxon>
        <taxon>Bacillati</taxon>
        <taxon>Bacillota</taxon>
        <taxon>Bacilli</taxon>
        <taxon>Lactobacillales</taxon>
        <taxon>Streptococcaceae</taxon>
        <taxon>Streptococcus</taxon>
    </lineage>
</organism>